<name>DAPE_STAAM</name>
<keyword id="KW-0028">Amino-acid biosynthesis</keyword>
<keyword id="KW-0170">Cobalt</keyword>
<keyword id="KW-0220">Diaminopimelate biosynthesis</keyword>
<keyword id="KW-0378">Hydrolase</keyword>
<keyword id="KW-0457">Lysine biosynthesis</keyword>
<keyword id="KW-0479">Metal-binding</keyword>
<keyword id="KW-0862">Zinc</keyword>
<reference key="1">
    <citation type="journal article" date="2001" name="Lancet">
        <title>Whole genome sequencing of meticillin-resistant Staphylococcus aureus.</title>
        <authorList>
            <person name="Kuroda M."/>
            <person name="Ohta T."/>
            <person name="Uchiyama I."/>
            <person name="Baba T."/>
            <person name="Yuzawa H."/>
            <person name="Kobayashi I."/>
            <person name="Cui L."/>
            <person name="Oguchi A."/>
            <person name="Aoki K."/>
            <person name="Nagai Y."/>
            <person name="Lian J.-Q."/>
            <person name="Ito T."/>
            <person name="Kanamori M."/>
            <person name="Matsumaru H."/>
            <person name="Maruyama A."/>
            <person name="Murakami H."/>
            <person name="Hosoyama A."/>
            <person name="Mizutani-Ui Y."/>
            <person name="Takahashi N.K."/>
            <person name="Sawano T."/>
            <person name="Inoue R."/>
            <person name="Kaito C."/>
            <person name="Sekimizu K."/>
            <person name="Hirakawa H."/>
            <person name="Kuhara S."/>
            <person name="Goto S."/>
            <person name="Yabuzaki J."/>
            <person name="Kanehisa M."/>
            <person name="Yamashita A."/>
            <person name="Oshima K."/>
            <person name="Furuya K."/>
            <person name="Yoshino C."/>
            <person name="Shiba T."/>
            <person name="Hattori M."/>
            <person name="Ogasawara N."/>
            <person name="Hayashi H."/>
            <person name="Hiramatsu K."/>
        </authorList>
    </citation>
    <scope>NUCLEOTIDE SEQUENCE [LARGE SCALE GENOMIC DNA]</scope>
    <source>
        <strain>Mu50 / ATCC 700699</strain>
    </source>
</reference>
<organism>
    <name type="scientific">Staphylococcus aureus (strain Mu50 / ATCC 700699)</name>
    <dbReference type="NCBI Taxonomy" id="158878"/>
    <lineage>
        <taxon>Bacteria</taxon>
        <taxon>Bacillati</taxon>
        <taxon>Bacillota</taxon>
        <taxon>Bacilli</taxon>
        <taxon>Bacillales</taxon>
        <taxon>Staphylococcaceae</taxon>
        <taxon>Staphylococcus</taxon>
    </lineage>
</organism>
<sequence length="400" mass="43995">MTTFSEKEKIQLLADIVELQTENNNEIDVCNYLKDLFDKYDIKSEILKVNEHRANIVAEIGNGSPILALSGHMDVVDAGNQDNWTYPPFQLTEKAGKLYGRGTTDMKGGLMALVITLIELKEQNQLPQGTIRLLATAGEEKEQEGAKLLADKGYLDDVDGLIIAEPTGSGIYYAHKGSMSCKVTATGKAVHSSVPFIGDNAIDTLLEFYNQFKEKYSELKKHDTKHELDVAPMFKSLIGKEISEEDANYASGLTAVCSIINGGKQFNSVPDEASLEFNVRPVPEYDNDFIESFFQNIINDVDSNKLSLDIPSNHRPVTSDKNSKLITTIKDVASSYVEQDEIFVSALVGATDASSFLGDNKDNVDLAIFGPGNPLMAHQIDEYCLTVNIQISTSTFSLIK</sequence>
<accession>Q931I4</accession>
<evidence type="ECO:0000250" key="1"/>
<evidence type="ECO:0000305" key="2"/>
<protein>
    <recommendedName>
        <fullName>Probable succinyl-diaminopimelate desuccinylase</fullName>
        <shortName>SDAP desuccinylase</shortName>
        <ecNumber>3.5.1.18</ecNumber>
    </recommendedName>
</protein>
<proteinExistence type="inferred from homology"/>
<feature type="chain" id="PRO_0000185264" description="Probable succinyl-diaminopimelate desuccinylase">
    <location>
        <begin position="1"/>
        <end position="400"/>
    </location>
</feature>
<feature type="active site" evidence="1">
    <location>
        <position position="74"/>
    </location>
</feature>
<feature type="active site" description="Proton acceptor" evidence="1">
    <location>
        <position position="139"/>
    </location>
</feature>
<feature type="binding site" evidence="1">
    <location>
        <position position="72"/>
    </location>
    <ligand>
        <name>Zn(2+)</name>
        <dbReference type="ChEBI" id="CHEBI:29105"/>
        <label>1</label>
    </ligand>
</feature>
<feature type="binding site" evidence="1">
    <location>
        <position position="105"/>
    </location>
    <ligand>
        <name>Zn(2+)</name>
        <dbReference type="ChEBI" id="CHEBI:29105"/>
        <label>1</label>
    </ligand>
</feature>
<feature type="binding site" evidence="1">
    <location>
        <position position="105"/>
    </location>
    <ligand>
        <name>Zn(2+)</name>
        <dbReference type="ChEBI" id="CHEBI:29105"/>
        <label>2</label>
    </ligand>
</feature>
<feature type="binding site" evidence="1">
    <location>
        <position position="140"/>
    </location>
    <ligand>
        <name>Zn(2+)</name>
        <dbReference type="ChEBI" id="CHEBI:29105"/>
        <label>2</label>
    </ligand>
</feature>
<feature type="binding site" evidence="1">
    <location>
        <position position="165"/>
    </location>
    <ligand>
        <name>Zn(2+)</name>
        <dbReference type="ChEBI" id="CHEBI:29105"/>
        <label>1</label>
    </ligand>
</feature>
<feature type="binding site" evidence="1">
    <location>
        <position position="378"/>
    </location>
    <ligand>
        <name>Zn(2+)</name>
        <dbReference type="ChEBI" id="CHEBI:29105"/>
        <label>2</label>
    </ligand>
</feature>
<gene>
    <name type="primary">dapE</name>
    <name type="ordered locus">SAV2006</name>
</gene>
<comment type="catalytic activity">
    <reaction>
        <text>N-succinyl-(2S,6S)-2,6-diaminopimelate + H2O = (2S,6S)-2,6-diaminopimelate + succinate</text>
        <dbReference type="Rhea" id="RHEA:22608"/>
        <dbReference type="ChEBI" id="CHEBI:15377"/>
        <dbReference type="ChEBI" id="CHEBI:30031"/>
        <dbReference type="ChEBI" id="CHEBI:57609"/>
        <dbReference type="ChEBI" id="CHEBI:58087"/>
        <dbReference type="EC" id="3.5.1.18"/>
    </reaction>
</comment>
<comment type="cofactor">
    <cofactor evidence="1">
        <name>Zn(2+)</name>
        <dbReference type="ChEBI" id="CHEBI:29105"/>
    </cofactor>
    <cofactor evidence="1">
        <name>Co(2+)</name>
        <dbReference type="ChEBI" id="CHEBI:48828"/>
    </cofactor>
    <text evidence="1">Binds 2 Zn(2+) or Co(2+) ions per subunit.</text>
</comment>
<comment type="pathway">
    <text>Amino-acid biosynthesis; L-lysine biosynthesis via DAP pathway; LL-2,6-diaminopimelate from (S)-tetrahydrodipicolinate (succinylase route): step 3/3.</text>
</comment>
<comment type="similarity">
    <text evidence="2">Belongs to the peptidase M20A family.</text>
</comment>
<dbReference type="EC" id="3.5.1.18"/>
<dbReference type="EMBL" id="BA000017">
    <property type="protein sequence ID" value="BAB58168.1"/>
    <property type="molecule type" value="Genomic_DNA"/>
</dbReference>
<dbReference type="RefSeq" id="WP_000206624.1">
    <property type="nucleotide sequence ID" value="NC_002758.2"/>
</dbReference>
<dbReference type="SMR" id="Q931I4"/>
<dbReference type="KEGG" id="sav:SAV2006"/>
<dbReference type="HOGENOM" id="CLU_021802_2_2_9"/>
<dbReference type="PhylomeDB" id="Q931I4"/>
<dbReference type="UniPathway" id="UPA00034">
    <property type="reaction ID" value="UER00021"/>
</dbReference>
<dbReference type="Proteomes" id="UP000002481">
    <property type="component" value="Chromosome"/>
</dbReference>
<dbReference type="GO" id="GO:0046872">
    <property type="term" value="F:metal ion binding"/>
    <property type="evidence" value="ECO:0007669"/>
    <property type="project" value="UniProtKB-KW"/>
</dbReference>
<dbReference type="GO" id="GO:0009014">
    <property type="term" value="F:succinyl-diaminopimelate desuccinylase activity"/>
    <property type="evidence" value="ECO:0007669"/>
    <property type="project" value="UniProtKB-EC"/>
</dbReference>
<dbReference type="GO" id="GO:0019877">
    <property type="term" value="P:diaminopimelate biosynthetic process"/>
    <property type="evidence" value="ECO:0007669"/>
    <property type="project" value="UniProtKB-KW"/>
</dbReference>
<dbReference type="GO" id="GO:0009089">
    <property type="term" value="P:lysine biosynthetic process via diaminopimelate"/>
    <property type="evidence" value="ECO:0007669"/>
    <property type="project" value="UniProtKB-UniPathway"/>
</dbReference>
<dbReference type="CDD" id="cd08659">
    <property type="entry name" value="M20_ArgE_DapE-like"/>
    <property type="match status" value="1"/>
</dbReference>
<dbReference type="Gene3D" id="3.30.70.360">
    <property type="match status" value="1"/>
</dbReference>
<dbReference type="Gene3D" id="3.40.630.10">
    <property type="entry name" value="Zn peptidases"/>
    <property type="match status" value="1"/>
</dbReference>
<dbReference type="InterPro" id="IPR010182">
    <property type="entry name" value="ArgE/DapE"/>
</dbReference>
<dbReference type="InterPro" id="IPR001261">
    <property type="entry name" value="ArgE/DapE_CS"/>
</dbReference>
<dbReference type="InterPro" id="IPR036264">
    <property type="entry name" value="Bact_exopeptidase_dim_dom"/>
</dbReference>
<dbReference type="InterPro" id="IPR002933">
    <property type="entry name" value="Peptidase_M20"/>
</dbReference>
<dbReference type="InterPro" id="IPR011650">
    <property type="entry name" value="Peptidase_M20_dimer"/>
</dbReference>
<dbReference type="InterPro" id="IPR050072">
    <property type="entry name" value="Peptidase_M20A"/>
</dbReference>
<dbReference type="NCBIfam" id="TIGR01910">
    <property type="entry name" value="DapE-ArgE"/>
    <property type="match status" value="1"/>
</dbReference>
<dbReference type="NCBIfam" id="NF006365">
    <property type="entry name" value="PRK08588.1"/>
    <property type="match status" value="1"/>
</dbReference>
<dbReference type="PANTHER" id="PTHR43808">
    <property type="entry name" value="ACETYLORNITHINE DEACETYLASE"/>
    <property type="match status" value="1"/>
</dbReference>
<dbReference type="PANTHER" id="PTHR43808:SF8">
    <property type="entry name" value="PEPTIDASE M20 DIMERISATION DOMAIN-CONTAINING PROTEIN"/>
    <property type="match status" value="1"/>
</dbReference>
<dbReference type="Pfam" id="PF07687">
    <property type="entry name" value="M20_dimer"/>
    <property type="match status" value="1"/>
</dbReference>
<dbReference type="Pfam" id="PF01546">
    <property type="entry name" value="Peptidase_M20"/>
    <property type="match status" value="1"/>
</dbReference>
<dbReference type="SUPFAM" id="SSF55031">
    <property type="entry name" value="Bacterial exopeptidase dimerisation domain"/>
    <property type="match status" value="1"/>
</dbReference>
<dbReference type="SUPFAM" id="SSF53187">
    <property type="entry name" value="Zn-dependent exopeptidases"/>
    <property type="match status" value="1"/>
</dbReference>
<dbReference type="PROSITE" id="PS00758">
    <property type="entry name" value="ARGE_DAPE_CPG2_1"/>
    <property type="match status" value="1"/>
</dbReference>
<dbReference type="PROSITE" id="PS00759">
    <property type="entry name" value="ARGE_DAPE_CPG2_2"/>
    <property type="match status" value="1"/>
</dbReference>